<dbReference type="EC" id="1.1.1.330" evidence="4"/>
<dbReference type="EMBL" id="CR382139">
    <property type="protein sequence ID" value="CAG90492.1"/>
    <property type="molecule type" value="Genomic_DNA"/>
</dbReference>
<dbReference type="RefSeq" id="XP_462011.1">
    <property type="nucleotide sequence ID" value="XM_462011.1"/>
</dbReference>
<dbReference type="SMR" id="Q6BIG0"/>
<dbReference type="FunCoup" id="Q6BIG0">
    <property type="interactions" value="737"/>
</dbReference>
<dbReference type="STRING" id="284592.Q6BIG0"/>
<dbReference type="GeneID" id="2904915"/>
<dbReference type="KEGG" id="dha:DEHA2G10780g"/>
<dbReference type="VEuPathDB" id="FungiDB:DEHA2G10780g"/>
<dbReference type="eggNOG" id="KOG1014">
    <property type="taxonomic scope" value="Eukaryota"/>
</dbReference>
<dbReference type="HOGENOM" id="CLU_010194_38_0_1"/>
<dbReference type="InParanoid" id="Q6BIG0"/>
<dbReference type="OMA" id="LVAPGMM"/>
<dbReference type="OrthoDB" id="5545019at2759"/>
<dbReference type="UniPathway" id="UPA00094"/>
<dbReference type="Proteomes" id="UP000000599">
    <property type="component" value="Chromosome G"/>
</dbReference>
<dbReference type="GO" id="GO:0005789">
    <property type="term" value="C:endoplasmic reticulum membrane"/>
    <property type="evidence" value="ECO:0007669"/>
    <property type="project" value="UniProtKB-SubCell"/>
</dbReference>
<dbReference type="GO" id="GO:0045703">
    <property type="term" value="F:ketoreductase activity"/>
    <property type="evidence" value="ECO:0007669"/>
    <property type="project" value="UniProtKB-UniRule"/>
</dbReference>
<dbReference type="GO" id="GO:0141040">
    <property type="term" value="F:very-long-chain 3-oxoacyl-CoA reductase activity"/>
    <property type="evidence" value="ECO:0007669"/>
    <property type="project" value="UniProtKB-EC"/>
</dbReference>
<dbReference type="GO" id="GO:0030497">
    <property type="term" value="P:fatty acid elongation"/>
    <property type="evidence" value="ECO:0007669"/>
    <property type="project" value="UniProtKB-UniRule"/>
</dbReference>
<dbReference type="GO" id="GO:0030148">
    <property type="term" value="P:sphingolipid biosynthetic process"/>
    <property type="evidence" value="ECO:0007669"/>
    <property type="project" value="EnsemblFungi"/>
</dbReference>
<dbReference type="GO" id="GO:0042761">
    <property type="term" value="P:very long-chain fatty acid biosynthetic process"/>
    <property type="evidence" value="ECO:0007669"/>
    <property type="project" value="EnsemblFungi"/>
</dbReference>
<dbReference type="CDD" id="cd05356">
    <property type="entry name" value="17beta-HSD1_like_SDR_c"/>
    <property type="match status" value="1"/>
</dbReference>
<dbReference type="FunFam" id="3.40.50.720:FF:000317">
    <property type="entry name" value="Very-long-chain 3-oxoacyl-CoA reductase"/>
    <property type="match status" value="1"/>
</dbReference>
<dbReference type="Gene3D" id="3.40.50.720">
    <property type="entry name" value="NAD(P)-binding Rossmann-like Domain"/>
    <property type="match status" value="1"/>
</dbReference>
<dbReference type="HAMAP" id="MF_03107">
    <property type="entry name" value="3_ketoreductase"/>
    <property type="match status" value="1"/>
</dbReference>
<dbReference type="InterPro" id="IPR027533">
    <property type="entry name" value="3_ketoreductase_fungal"/>
</dbReference>
<dbReference type="InterPro" id="IPR036291">
    <property type="entry name" value="NAD(P)-bd_dom_sf"/>
</dbReference>
<dbReference type="InterPro" id="IPR020904">
    <property type="entry name" value="Sc_DH/Rdtase_CS"/>
</dbReference>
<dbReference type="InterPro" id="IPR002347">
    <property type="entry name" value="SDR_fam"/>
</dbReference>
<dbReference type="PANTHER" id="PTHR43086:SF2">
    <property type="entry name" value="HYDROXYSTEROID DEHYDROGENASE-LIKE PROTEIN 1"/>
    <property type="match status" value="1"/>
</dbReference>
<dbReference type="PANTHER" id="PTHR43086">
    <property type="entry name" value="VERY-LONG-CHAIN 3-OXOOACYL-COA REDUCTASE"/>
    <property type="match status" value="1"/>
</dbReference>
<dbReference type="Pfam" id="PF00106">
    <property type="entry name" value="adh_short"/>
    <property type="match status" value="1"/>
</dbReference>
<dbReference type="PIRSF" id="PIRSF000126">
    <property type="entry name" value="11-beta-HSD1"/>
    <property type="match status" value="1"/>
</dbReference>
<dbReference type="PRINTS" id="PR00081">
    <property type="entry name" value="GDHRDH"/>
</dbReference>
<dbReference type="SUPFAM" id="SSF51735">
    <property type="entry name" value="NAD(P)-binding Rossmann-fold domains"/>
    <property type="match status" value="1"/>
</dbReference>
<dbReference type="PROSITE" id="PS00061">
    <property type="entry name" value="ADH_SHORT"/>
    <property type="match status" value="1"/>
</dbReference>
<reference key="1">
    <citation type="journal article" date="2004" name="Nature">
        <title>Genome evolution in yeasts.</title>
        <authorList>
            <person name="Dujon B."/>
            <person name="Sherman D."/>
            <person name="Fischer G."/>
            <person name="Durrens P."/>
            <person name="Casaregola S."/>
            <person name="Lafontaine I."/>
            <person name="de Montigny J."/>
            <person name="Marck C."/>
            <person name="Neuveglise C."/>
            <person name="Talla E."/>
            <person name="Goffard N."/>
            <person name="Frangeul L."/>
            <person name="Aigle M."/>
            <person name="Anthouard V."/>
            <person name="Babour A."/>
            <person name="Barbe V."/>
            <person name="Barnay S."/>
            <person name="Blanchin S."/>
            <person name="Beckerich J.-M."/>
            <person name="Beyne E."/>
            <person name="Bleykasten C."/>
            <person name="Boisrame A."/>
            <person name="Boyer J."/>
            <person name="Cattolico L."/>
            <person name="Confanioleri F."/>
            <person name="de Daruvar A."/>
            <person name="Despons L."/>
            <person name="Fabre E."/>
            <person name="Fairhead C."/>
            <person name="Ferry-Dumazet H."/>
            <person name="Groppi A."/>
            <person name="Hantraye F."/>
            <person name="Hennequin C."/>
            <person name="Jauniaux N."/>
            <person name="Joyet P."/>
            <person name="Kachouri R."/>
            <person name="Kerrest A."/>
            <person name="Koszul R."/>
            <person name="Lemaire M."/>
            <person name="Lesur I."/>
            <person name="Ma L."/>
            <person name="Muller H."/>
            <person name="Nicaud J.-M."/>
            <person name="Nikolski M."/>
            <person name="Oztas S."/>
            <person name="Ozier-Kalogeropoulos O."/>
            <person name="Pellenz S."/>
            <person name="Potier S."/>
            <person name="Richard G.-F."/>
            <person name="Straub M.-L."/>
            <person name="Suleau A."/>
            <person name="Swennen D."/>
            <person name="Tekaia F."/>
            <person name="Wesolowski-Louvel M."/>
            <person name="Westhof E."/>
            <person name="Wirth B."/>
            <person name="Zeniou-Meyer M."/>
            <person name="Zivanovic Y."/>
            <person name="Bolotin-Fukuhara M."/>
            <person name="Thierry A."/>
            <person name="Bouchier C."/>
            <person name="Caudron B."/>
            <person name="Scarpelli C."/>
            <person name="Gaillardin C."/>
            <person name="Weissenbach J."/>
            <person name="Wincker P."/>
            <person name="Souciet J.-L."/>
        </authorList>
    </citation>
    <scope>NUCLEOTIDE SEQUENCE [LARGE SCALE GENOMIC DNA]</scope>
    <source>
        <strain>ATCC 36239 / CBS 767 / BCRC 21394 / JCM 1990 / NBRC 0083 / IGC 2968</strain>
    </source>
</reference>
<comment type="function">
    <text evidence="4">Component of the microsomal membrane bound fatty acid elongation system, which produces the 26-carbon very long-chain fatty acids (VLCFA) from palmitate. Catalyzes the reduction of the 3-ketoacyl-CoA intermediate that is formed in each cycle of fatty acid elongation. VLCFAs serve as precursors for ceramide and sphingolipids.</text>
</comment>
<comment type="catalytic activity">
    <reaction evidence="4">
        <text>a very-long-chain (3R)-3-hydroxyacyl-CoA + NADP(+) = a very-long-chain 3-oxoacyl-CoA + NADPH + H(+)</text>
        <dbReference type="Rhea" id="RHEA:48680"/>
        <dbReference type="ChEBI" id="CHEBI:15378"/>
        <dbReference type="ChEBI" id="CHEBI:57783"/>
        <dbReference type="ChEBI" id="CHEBI:58349"/>
        <dbReference type="ChEBI" id="CHEBI:85440"/>
        <dbReference type="ChEBI" id="CHEBI:90725"/>
        <dbReference type="EC" id="1.1.1.330"/>
    </reaction>
</comment>
<comment type="pathway">
    <text evidence="3">Lipid metabolism; fatty acid biosynthesis.</text>
</comment>
<comment type="subcellular location">
    <subcellularLocation>
        <location evidence="4">Endoplasmic reticulum membrane</location>
        <topology evidence="4">Single-pass membrane protein</topology>
    </subcellularLocation>
</comment>
<comment type="similarity">
    <text evidence="4">Belongs to the short-chain dehydrogenases/reductases (SDR) family.</text>
</comment>
<keyword id="KW-0256">Endoplasmic reticulum</keyword>
<keyword id="KW-0275">Fatty acid biosynthesis</keyword>
<keyword id="KW-0276">Fatty acid metabolism</keyword>
<keyword id="KW-0444">Lipid biosynthesis</keyword>
<keyword id="KW-0443">Lipid metabolism</keyword>
<keyword id="KW-0472">Membrane</keyword>
<keyword id="KW-0521">NADP</keyword>
<keyword id="KW-0560">Oxidoreductase</keyword>
<keyword id="KW-1185">Reference proteome</keyword>
<keyword id="KW-0812">Transmembrane</keyword>
<keyword id="KW-1133">Transmembrane helix</keyword>
<name>MKAR_DEBHA</name>
<evidence type="ECO:0000250" key="1">
    <source>
        <dbReference type="UniProtKB" id="L0E2Z4"/>
    </source>
</evidence>
<evidence type="ECO:0000250" key="2">
    <source>
        <dbReference type="UniProtKB" id="O93868"/>
    </source>
</evidence>
<evidence type="ECO:0000250" key="3">
    <source>
        <dbReference type="UniProtKB" id="P38286"/>
    </source>
</evidence>
<evidence type="ECO:0000255" key="4">
    <source>
        <dbReference type="HAMAP-Rule" id="MF_03107"/>
    </source>
</evidence>
<organism>
    <name type="scientific">Debaryomyces hansenii (strain ATCC 36239 / CBS 767 / BCRC 21394 / JCM 1990 / NBRC 0083 / IGC 2968)</name>
    <name type="common">Yeast</name>
    <name type="synonym">Torulaspora hansenii</name>
    <dbReference type="NCBI Taxonomy" id="284592"/>
    <lineage>
        <taxon>Eukaryota</taxon>
        <taxon>Fungi</taxon>
        <taxon>Dikarya</taxon>
        <taxon>Ascomycota</taxon>
        <taxon>Saccharomycotina</taxon>
        <taxon>Pichiomycetes</taxon>
        <taxon>Debaryomycetaceae</taxon>
        <taxon>Debaryomyces</taxon>
    </lineage>
</organism>
<proteinExistence type="inferred from homology"/>
<sequence>MSLCQFVSSISDCRITQALIYGVLFVGVYKITTFTLSVGSLLVDLFVLPAVDFKKYGAKQGKWAVVTGASDGIGKEYAYQLASRGLNVVLISRTLSKLELIATEIETKYKVSTEVIAFDASTDNDANYAKILHTVSNLPVTVLVNNVGQSHSIPVPFLETEDKELRDIITINNTVTLKITQAVAPVIADTVAKENKKVKGLILTMGSFGGLLPTPYLATYSGSKSFLQAWSSALAGELKPQGIDVQLVISYLVTSAMSKIRRSSASIPNPKNFVTSVLNTAGRRCGAQERFATTTPYWTHALMHFGIENTVGVYSKFANSLNFSMHKSIRVRALKKAARANATKTD</sequence>
<feature type="chain" id="PRO_0000357308" description="Very-long-chain 3-oxoacyl-CoA reductase">
    <location>
        <begin position="1"/>
        <end position="346"/>
    </location>
</feature>
<feature type="transmembrane region" description="Helical" evidence="4">
    <location>
        <begin position="19"/>
        <end position="39"/>
    </location>
</feature>
<feature type="active site" description="Proton donor" evidence="2">
    <location>
        <position position="220"/>
    </location>
</feature>
<feature type="active site" description="Lowers pKa of active site Tyr" evidence="2">
    <location>
        <position position="224"/>
    </location>
</feature>
<feature type="binding site" evidence="1">
    <location>
        <position position="65"/>
    </location>
    <ligand>
        <name>NADP(+)</name>
        <dbReference type="ChEBI" id="CHEBI:58349"/>
    </ligand>
</feature>
<feature type="binding site" evidence="1">
    <location>
        <position position="119"/>
    </location>
    <ligand>
        <name>NADP(+)</name>
        <dbReference type="ChEBI" id="CHEBI:58349"/>
    </ligand>
</feature>
<feature type="binding site" evidence="2">
    <location>
        <position position="146"/>
    </location>
    <ligand>
        <name>NADP(+)</name>
        <dbReference type="ChEBI" id="CHEBI:58349"/>
    </ligand>
</feature>
<feature type="binding site" evidence="2">
    <location>
        <position position="220"/>
    </location>
    <ligand>
        <name>NADP(+)</name>
        <dbReference type="ChEBI" id="CHEBI:58349"/>
    </ligand>
</feature>
<feature type="binding site" evidence="2">
    <location>
        <position position="224"/>
    </location>
    <ligand>
        <name>NADP(+)</name>
        <dbReference type="ChEBI" id="CHEBI:58349"/>
    </ligand>
</feature>
<feature type="binding site" evidence="2">
    <location>
        <position position="253"/>
    </location>
    <ligand>
        <name>NADP(+)</name>
        <dbReference type="ChEBI" id="CHEBI:58349"/>
    </ligand>
</feature>
<feature type="binding site" evidence="1">
    <location>
        <position position="255"/>
    </location>
    <ligand>
        <name>NADP(+)</name>
        <dbReference type="ChEBI" id="CHEBI:58349"/>
    </ligand>
</feature>
<accession>Q6BIG0</accession>
<gene>
    <name type="ordered locus">DEHA2G10780g</name>
</gene>
<protein>
    <recommendedName>
        <fullName evidence="4">Very-long-chain 3-oxoacyl-CoA reductase</fullName>
        <ecNumber evidence="4">1.1.1.330</ecNumber>
    </recommendedName>
    <alternativeName>
        <fullName evidence="4">3-ketoacyl-CoA reductase</fullName>
        <shortName evidence="4">3-ketoreductase</shortName>
        <shortName evidence="4">KAR</shortName>
    </alternativeName>
    <alternativeName>
        <fullName evidence="4">Microsomal beta-keto-reductase</fullName>
    </alternativeName>
</protein>